<name>SSRP_BACCN</name>
<dbReference type="EMBL" id="CP000764">
    <property type="protein sequence ID" value="ABS23869.1"/>
    <property type="molecule type" value="Genomic_DNA"/>
</dbReference>
<dbReference type="RefSeq" id="WP_012096126.1">
    <property type="nucleotide sequence ID" value="NC_009674.1"/>
</dbReference>
<dbReference type="SMR" id="A7GUR1"/>
<dbReference type="STRING" id="315749.Bcer98_3672"/>
<dbReference type="GeneID" id="33898919"/>
<dbReference type="KEGG" id="bcy:Bcer98_3672"/>
<dbReference type="eggNOG" id="COG0691">
    <property type="taxonomic scope" value="Bacteria"/>
</dbReference>
<dbReference type="HOGENOM" id="CLU_108953_0_0_9"/>
<dbReference type="OrthoDB" id="9805462at2"/>
<dbReference type="Proteomes" id="UP000002300">
    <property type="component" value="Chromosome"/>
</dbReference>
<dbReference type="GO" id="GO:0005829">
    <property type="term" value="C:cytosol"/>
    <property type="evidence" value="ECO:0007669"/>
    <property type="project" value="TreeGrafter"/>
</dbReference>
<dbReference type="GO" id="GO:0003723">
    <property type="term" value="F:RNA binding"/>
    <property type="evidence" value="ECO:0007669"/>
    <property type="project" value="UniProtKB-UniRule"/>
</dbReference>
<dbReference type="GO" id="GO:0070929">
    <property type="term" value="P:trans-translation"/>
    <property type="evidence" value="ECO:0007669"/>
    <property type="project" value="UniProtKB-UniRule"/>
</dbReference>
<dbReference type="CDD" id="cd09294">
    <property type="entry name" value="SmpB"/>
    <property type="match status" value="1"/>
</dbReference>
<dbReference type="Gene3D" id="2.40.280.10">
    <property type="match status" value="1"/>
</dbReference>
<dbReference type="HAMAP" id="MF_00023">
    <property type="entry name" value="SmpB"/>
    <property type="match status" value="1"/>
</dbReference>
<dbReference type="InterPro" id="IPR023620">
    <property type="entry name" value="SmpB"/>
</dbReference>
<dbReference type="InterPro" id="IPR000037">
    <property type="entry name" value="SsrA-bd_prot"/>
</dbReference>
<dbReference type="InterPro" id="IPR020081">
    <property type="entry name" value="SsrA-bd_prot_CS"/>
</dbReference>
<dbReference type="NCBIfam" id="NF003843">
    <property type="entry name" value="PRK05422.1"/>
    <property type="match status" value="1"/>
</dbReference>
<dbReference type="NCBIfam" id="TIGR00086">
    <property type="entry name" value="smpB"/>
    <property type="match status" value="1"/>
</dbReference>
<dbReference type="PANTHER" id="PTHR30308:SF2">
    <property type="entry name" value="SSRA-BINDING PROTEIN"/>
    <property type="match status" value="1"/>
</dbReference>
<dbReference type="PANTHER" id="PTHR30308">
    <property type="entry name" value="TMRNA-BINDING COMPONENT OF TRANS-TRANSLATION TAGGING COMPLEX"/>
    <property type="match status" value="1"/>
</dbReference>
<dbReference type="Pfam" id="PF01668">
    <property type="entry name" value="SmpB"/>
    <property type="match status" value="1"/>
</dbReference>
<dbReference type="SUPFAM" id="SSF74982">
    <property type="entry name" value="Small protein B (SmpB)"/>
    <property type="match status" value="1"/>
</dbReference>
<dbReference type="PROSITE" id="PS01317">
    <property type="entry name" value="SSRP"/>
    <property type="match status" value="1"/>
</dbReference>
<comment type="function">
    <text evidence="1">Required for rescue of stalled ribosomes mediated by trans-translation. Binds to transfer-messenger RNA (tmRNA), required for stable association of tmRNA with ribosomes. tmRNA and SmpB together mimic tRNA shape, replacing the anticodon stem-loop with SmpB. tmRNA is encoded by the ssrA gene; the 2 termini fold to resemble tRNA(Ala) and it encodes a 'tag peptide', a short internal open reading frame. During trans-translation Ala-aminoacylated tmRNA acts like a tRNA, entering the A-site of stalled ribosomes, displacing the stalled mRNA. The ribosome then switches to translate the ORF on the tmRNA; the nascent peptide is terminated with the 'tag peptide' encoded by the tmRNA and targeted for degradation. The ribosome is freed to recommence translation, which seems to be the essential function of trans-translation.</text>
</comment>
<comment type="subcellular location">
    <subcellularLocation>
        <location evidence="1">Cytoplasm</location>
    </subcellularLocation>
    <text evidence="1">The tmRNA-SmpB complex associates with stalled 70S ribosomes.</text>
</comment>
<comment type="similarity">
    <text evidence="1">Belongs to the SmpB family.</text>
</comment>
<organism>
    <name type="scientific">Bacillus cytotoxicus (strain DSM 22905 / CIP 110041 / 391-98 / NVH 391-98)</name>
    <dbReference type="NCBI Taxonomy" id="315749"/>
    <lineage>
        <taxon>Bacteria</taxon>
        <taxon>Bacillati</taxon>
        <taxon>Bacillota</taxon>
        <taxon>Bacilli</taxon>
        <taxon>Bacillales</taxon>
        <taxon>Bacillaceae</taxon>
        <taxon>Bacillus</taxon>
        <taxon>Bacillus cereus group</taxon>
    </lineage>
</organism>
<gene>
    <name evidence="1" type="primary">smpB</name>
    <name type="ordered locus">Bcer98_3672</name>
</gene>
<feature type="chain" id="PRO_1000074341" description="SsrA-binding protein">
    <location>
        <begin position="1"/>
        <end position="155"/>
    </location>
</feature>
<protein>
    <recommendedName>
        <fullName evidence="1">SsrA-binding protein</fullName>
    </recommendedName>
    <alternativeName>
        <fullName evidence="1">Small protein B</fullName>
    </alternativeName>
</protein>
<evidence type="ECO:0000255" key="1">
    <source>
        <dbReference type="HAMAP-Rule" id="MF_00023"/>
    </source>
</evidence>
<reference key="1">
    <citation type="journal article" date="2008" name="Chem. Biol. Interact.">
        <title>Extending the Bacillus cereus group genomics to putative food-borne pathogens of different toxicity.</title>
        <authorList>
            <person name="Lapidus A."/>
            <person name="Goltsman E."/>
            <person name="Auger S."/>
            <person name="Galleron N."/>
            <person name="Segurens B."/>
            <person name="Dossat C."/>
            <person name="Land M.L."/>
            <person name="Broussolle V."/>
            <person name="Brillard J."/>
            <person name="Guinebretiere M.-H."/>
            <person name="Sanchis V."/>
            <person name="Nguen-the C."/>
            <person name="Lereclus D."/>
            <person name="Richardson P."/>
            <person name="Wincker P."/>
            <person name="Weissenbach J."/>
            <person name="Ehrlich S.D."/>
            <person name="Sorokin A."/>
        </authorList>
    </citation>
    <scope>NUCLEOTIDE SEQUENCE [LARGE SCALE GENOMIC DNA]</scope>
    <source>
        <strain>DSM 22905 / CIP 110041 / 391-98 / NVH 391-98</strain>
    </source>
</reference>
<sequence length="155" mass="18005">MPKGSGKVIAQNKKAFHDYFIDETYEAGLVLQGTEIKAIRAGRVNLKDAFARVHNGEVWVHNMHISPYEQGNRFNHDPLRTRKLLLHKKEIQKLVGYTKETGYTLVPLKIYLKNGFAKMALGLARGKKQYDKRHDLKEKEAKREIARAFRDRQKM</sequence>
<accession>A7GUR1</accession>
<proteinExistence type="inferred from homology"/>
<keyword id="KW-0963">Cytoplasm</keyword>
<keyword id="KW-0694">RNA-binding</keyword>